<sequence>MQQTKKLTHSDITIAVMSGPFLQRGEPALVSKWYRTKMALACGVDLVVELPYAFSTQKAETFANGAISILNALHVSEICFGSEDGQIENFYNTISVQKNEEETFNRLVKQFMNAGNSYAKATSEAFLHILSSEKNIDMSQPNNILGFQYIKAILMQNSSMQAQTIKRFASHYHDETFNDQHIASATSIRKQLFSENSSFTEIEPFIPKATASLLASYKQNYGTLHNWEQYFSFFKYKLMTMSPEDLRHIYEIEEGLEHRILSKIQTSSSFHSFMEALKTKRYTWTRLQRACTHILTNTTKEEIHCANIEQHAPYIRLLGMSQKGQTYLSKNKKKIELPILTHTKTFDHPTLHIDRKANSVYFSIMQEPLRAQLLKQDATHHPIRYDETTAKFL</sequence>
<proteinExistence type="inferred from homology"/>
<keyword id="KW-0067">ATP-binding</keyword>
<keyword id="KW-0963">Cytoplasm</keyword>
<keyword id="KW-0436">Ligase</keyword>
<keyword id="KW-0547">Nucleotide-binding</keyword>
<keyword id="KW-0694">RNA-binding</keyword>
<keyword id="KW-0819">tRNA processing</keyword>
<keyword id="KW-0820">tRNA-binding</keyword>
<comment type="function">
    <text evidence="1">Catalyzes the formation of N(4)-acetylcytidine (ac(4)C) at the wobble position of elongator tRNA(Met), using acetate and ATP as substrates. First activates an acetate ion to form acetyladenylate (Ac-AMP) and then transfers the acetyl group to tRNA to form ac(4)C34.</text>
</comment>
<comment type="catalytic activity">
    <reaction evidence="1">
        <text>cytidine(34) in elongator tRNA(Met) + acetate + ATP = N(4)-acetylcytidine(34) in elongator tRNA(Met) + AMP + diphosphate</text>
        <dbReference type="Rhea" id="RHEA:58144"/>
        <dbReference type="Rhea" id="RHEA-COMP:10693"/>
        <dbReference type="Rhea" id="RHEA-COMP:10694"/>
        <dbReference type="ChEBI" id="CHEBI:30089"/>
        <dbReference type="ChEBI" id="CHEBI:30616"/>
        <dbReference type="ChEBI" id="CHEBI:33019"/>
        <dbReference type="ChEBI" id="CHEBI:74900"/>
        <dbReference type="ChEBI" id="CHEBI:82748"/>
        <dbReference type="ChEBI" id="CHEBI:456215"/>
    </reaction>
</comment>
<comment type="subcellular location">
    <subcellularLocation>
        <location evidence="1">Cytoplasm</location>
    </subcellularLocation>
</comment>
<comment type="similarity">
    <text evidence="1">Belongs to the TmcAL family.</text>
</comment>
<protein>
    <recommendedName>
        <fullName evidence="1">tRNA(Met) cytidine acetate ligase</fullName>
        <ecNumber evidence="1">6.3.4.-</ecNumber>
    </recommendedName>
</protein>
<feature type="chain" id="PRO_1000198850" description="tRNA(Met) cytidine acetate ligase">
    <location>
        <begin position="1"/>
        <end position="393"/>
    </location>
</feature>
<feature type="binding site" evidence="1">
    <location>
        <position position="81"/>
    </location>
    <ligand>
        <name>ATP</name>
        <dbReference type="ChEBI" id="CHEBI:30616"/>
    </ligand>
</feature>
<feature type="binding site" evidence="1">
    <location>
        <position position="142"/>
    </location>
    <ligand>
        <name>ATP</name>
        <dbReference type="ChEBI" id="CHEBI:30616"/>
    </ligand>
</feature>
<feature type="binding site" evidence="1">
    <location>
        <position position="167"/>
    </location>
    <ligand>
        <name>ATP</name>
        <dbReference type="ChEBI" id="CHEBI:30616"/>
    </ligand>
</feature>
<accession>B7HMA5</accession>
<gene>
    <name evidence="1" type="primary">tmcAL</name>
    <name type="ordered locus">BCAH187_A4037</name>
</gene>
<name>TMCAL_BACC7</name>
<evidence type="ECO:0000255" key="1">
    <source>
        <dbReference type="HAMAP-Rule" id="MF_01539"/>
    </source>
</evidence>
<reference key="1">
    <citation type="submission" date="2008-10" db="EMBL/GenBank/DDBJ databases">
        <title>Genome sequence of Bacillus cereus AH187.</title>
        <authorList>
            <person name="Dodson R.J."/>
            <person name="Durkin A.S."/>
            <person name="Rosovitz M.J."/>
            <person name="Rasko D.A."/>
            <person name="Kolsto A.B."/>
            <person name="Okstad O.A."/>
            <person name="Ravel J."/>
            <person name="Sutton G."/>
        </authorList>
    </citation>
    <scope>NUCLEOTIDE SEQUENCE [LARGE SCALE GENOMIC DNA]</scope>
    <source>
        <strain>AH187</strain>
    </source>
</reference>
<dbReference type="EC" id="6.3.4.-" evidence="1"/>
<dbReference type="EMBL" id="CP001177">
    <property type="protein sequence ID" value="ACJ80699.1"/>
    <property type="molecule type" value="Genomic_DNA"/>
</dbReference>
<dbReference type="SMR" id="B7HMA5"/>
<dbReference type="KEGG" id="bcr:BCAH187_A4037"/>
<dbReference type="HOGENOM" id="CLU_038915_0_2_9"/>
<dbReference type="Proteomes" id="UP000002214">
    <property type="component" value="Chromosome"/>
</dbReference>
<dbReference type="GO" id="GO:0005737">
    <property type="term" value="C:cytoplasm"/>
    <property type="evidence" value="ECO:0007669"/>
    <property type="project" value="UniProtKB-SubCell"/>
</dbReference>
<dbReference type="GO" id="GO:0005524">
    <property type="term" value="F:ATP binding"/>
    <property type="evidence" value="ECO:0007669"/>
    <property type="project" value="UniProtKB-KW"/>
</dbReference>
<dbReference type="GO" id="GO:0016879">
    <property type="term" value="F:ligase activity, forming carbon-nitrogen bonds"/>
    <property type="evidence" value="ECO:0007669"/>
    <property type="project" value="UniProtKB-UniRule"/>
</dbReference>
<dbReference type="GO" id="GO:0000049">
    <property type="term" value="F:tRNA binding"/>
    <property type="evidence" value="ECO:0007669"/>
    <property type="project" value="UniProtKB-KW"/>
</dbReference>
<dbReference type="GO" id="GO:0006400">
    <property type="term" value="P:tRNA modification"/>
    <property type="evidence" value="ECO:0007669"/>
    <property type="project" value="UniProtKB-UniRule"/>
</dbReference>
<dbReference type="Gene3D" id="3.40.50.620">
    <property type="entry name" value="HUPs"/>
    <property type="match status" value="1"/>
</dbReference>
<dbReference type="HAMAP" id="MF_01539">
    <property type="entry name" value="TmcAL"/>
    <property type="match status" value="1"/>
</dbReference>
<dbReference type="InterPro" id="IPR014729">
    <property type="entry name" value="Rossmann-like_a/b/a_fold"/>
</dbReference>
<dbReference type="InterPro" id="IPR008513">
    <property type="entry name" value="tRNA(Met)_cyd_acetate_ligase"/>
</dbReference>
<dbReference type="NCBIfam" id="NF010191">
    <property type="entry name" value="PRK13670.1"/>
    <property type="match status" value="1"/>
</dbReference>
<dbReference type="PANTHER" id="PTHR37825">
    <property type="entry name" value="TRNA(MET) CYTIDINE ACETATE LIGASE"/>
    <property type="match status" value="1"/>
</dbReference>
<dbReference type="PANTHER" id="PTHR37825:SF1">
    <property type="entry name" value="TRNA(MET) CYTIDINE ACETATE LIGASE"/>
    <property type="match status" value="1"/>
</dbReference>
<dbReference type="Pfam" id="PF05636">
    <property type="entry name" value="HIGH_NTase1"/>
    <property type="match status" value="1"/>
</dbReference>
<dbReference type="SUPFAM" id="SSF52374">
    <property type="entry name" value="Nucleotidylyl transferase"/>
    <property type="match status" value="1"/>
</dbReference>
<organism>
    <name type="scientific">Bacillus cereus (strain AH187)</name>
    <dbReference type="NCBI Taxonomy" id="405534"/>
    <lineage>
        <taxon>Bacteria</taxon>
        <taxon>Bacillati</taxon>
        <taxon>Bacillota</taxon>
        <taxon>Bacilli</taxon>
        <taxon>Bacillales</taxon>
        <taxon>Bacillaceae</taxon>
        <taxon>Bacillus</taxon>
        <taxon>Bacillus cereus group</taxon>
    </lineage>
</organism>